<sequence>MEGDVDEDDGTFTNISLADDSADGEPTVLRFRSEEQYSTMNCEIDGDMENQVEQEEKTRLINQVLELQHTLEDLSARVDAVKEENLKLKSENQVLGQYIENLMSASSVFQTTDTKSKRK</sequence>
<organism>
    <name type="scientific">Danio rerio</name>
    <name type="common">Zebrafish</name>
    <name type="synonym">Brachydanio rerio</name>
    <dbReference type="NCBI Taxonomy" id="7955"/>
    <lineage>
        <taxon>Eukaryota</taxon>
        <taxon>Metazoa</taxon>
        <taxon>Chordata</taxon>
        <taxon>Craniata</taxon>
        <taxon>Vertebrata</taxon>
        <taxon>Euteleostomi</taxon>
        <taxon>Actinopterygii</taxon>
        <taxon>Neopterygii</taxon>
        <taxon>Teleostei</taxon>
        <taxon>Ostariophysi</taxon>
        <taxon>Cypriniformes</taxon>
        <taxon>Danionidae</taxon>
        <taxon>Danioninae</taxon>
        <taxon>Danio</taxon>
    </lineage>
</organism>
<reference key="1">
    <citation type="submission" date="2006-10" db="EMBL/GenBank/DDBJ databases">
        <authorList>
            <consortium name="NIH - Zebrafish Gene Collection (ZGC) project"/>
        </authorList>
    </citation>
    <scope>NUCLEOTIDE SEQUENCE [LARGE SCALE MRNA]</scope>
    <source>
        <tissue>Olfactory epithelium</tissue>
    </source>
</reference>
<proteinExistence type="inferred from homology"/>
<protein>
    <recommendedName>
        <fullName>Short coiled-coil protein A</fullName>
    </recommendedName>
</protein>
<feature type="chain" id="PRO_0000334167" description="Short coiled-coil protein A">
    <location>
        <begin position="1"/>
        <end position="119"/>
    </location>
</feature>
<feature type="region of interest" description="Disordered" evidence="3">
    <location>
        <begin position="1"/>
        <end position="26"/>
    </location>
</feature>
<feature type="coiled-coil region" evidence="2">
    <location>
        <begin position="48"/>
        <end position="95"/>
    </location>
</feature>
<feature type="compositionally biased region" description="Acidic residues" evidence="3">
    <location>
        <begin position="1"/>
        <end position="10"/>
    </location>
</feature>
<accession>Q08BG7</accession>
<gene>
    <name type="primary">scoca</name>
    <name type="synonym">scoc</name>
    <name type="ORF">zgc:153769</name>
</gene>
<keyword id="KW-0175">Coiled coil</keyword>
<keyword id="KW-0963">Cytoplasm</keyword>
<keyword id="KW-0333">Golgi apparatus</keyword>
<keyword id="KW-0472">Membrane</keyword>
<keyword id="KW-1185">Reference proteome</keyword>
<name>SCOCA_DANRE</name>
<dbReference type="EMBL" id="BC124730">
    <property type="protein sequence ID" value="AAI24731.1"/>
    <property type="molecule type" value="mRNA"/>
</dbReference>
<dbReference type="RefSeq" id="NP_001071027.1">
    <property type="nucleotide sequence ID" value="NM_001077559.1"/>
</dbReference>
<dbReference type="SMR" id="Q08BG7"/>
<dbReference type="FunCoup" id="Q08BG7">
    <property type="interactions" value="180"/>
</dbReference>
<dbReference type="STRING" id="7955.ENSDARP00000107068"/>
<dbReference type="PaxDb" id="7955-ENSDARP00000107068"/>
<dbReference type="Ensembl" id="ENSDART00000122059">
    <property type="protein sequence ID" value="ENSDARP00000107068"/>
    <property type="gene ID" value="ENSDARG00000087333"/>
</dbReference>
<dbReference type="GeneID" id="562638"/>
<dbReference type="KEGG" id="dre:562638"/>
<dbReference type="AGR" id="ZFIN:ZDB-GENE-061013-114"/>
<dbReference type="CTD" id="562638"/>
<dbReference type="ZFIN" id="ZDB-GENE-061013-114">
    <property type="gene designation" value="scoca"/>
</dbReference>
<dbReference type="eggNOG" id="KOG3650">
    <property type="taxonomic scope" value="Eukaryota"/>
</dbReference>
<dbReference type="HOGENOM" id="CLU_130081_1_0_1"/>
<dbReference type="InParanoid" id="Q08BG7"/>
<dbReference type="OMA" id="QYTENLM"/>
<dbReference type="OrthoDB" id="2163284at2759"/>
<dbReference type="PhylomeDB" id="Q08BG7"/>
<dbReference type="TreeFam" id="TF323340"/>
<dbReference type="Reactome" id="R-DRE-6811440">
    <property type="pathway name" value="Retrograde transport at the Trans-Golgi-Network"/>
</dbReference>
<dbReference type="PRO" id="PR:Q08BG7"/>
<dbReference type="Proteomes" id="UP000000437">
    <property type="component" value="Chromosome 1"/>
</dbReference>
<dbReference type="Bgee" id="ENSDARG00000087333">
    <property type="expression patterns" value="Expressed in retina and 25 other cell types or tissues"/>
</dbReference>
<dbReference type="ExpressionAtlas" id="Q08BG7">
    <property type="expression patterns" value="baseline"/>
</dbReference>
<dbReference type="GO" id="GO:0005829">
    <property type="term" value="C:cytosol"/>
    <property type="evidence" value="ECO:0007669"/>
    <property type="project" value="UniProtKB-SubCell"/>
</dbReference>
<dbReference type="GO" id="GO:0000139">
    <property type="term" value="C:Golgi membrane"/>
    <property type="evidence" value="ECO:0007669"/>
    <property type="project" value="UniProtKB-SubCell"/>
</dbReference>
<dbReference type="GO" id="GO:0016239">
    <property type="term" value="P:positive regulation of macroautophagy"/>
    <property type="evidence" value="ECO:0000250"/>
    <property type="project" value="GO_Central"/>
</dbReference>
<dbReference type="GO" id="GO:0061635">
    <property type="term" value="P:regulation of protein complex stability"/>
    <property type="evidence" value="ECO:0000250"/>
    <property type="project" value="GO_Central"/>
</dbReference>
<dbReference type="FunFam" id="1.20.5.170:FF:000038">
    <property type="entry name" value="Short coiled-coil protein a"/>
    <property type="match status" value="1"/>
</dbReference>
<dbReference type="Gene3D" id="1.20.5.170">
    <property type="match status" value="1"/>
</dbReference>
<dbReference type="InterPro" id="IPR019357">
    <property type="entry name" value="SCOC"/>
</dbReference>
<dbReference type="PANTHER" id="PTHR21614">
    <property type="entry name" value="SHORT COILED COIL PROTEIN"/>
    <property type="match status" value="1"/>
</dbReference>
<dbReference type="PANTHER" id="PTHR21614:SF4">
    <property type="entry name" value="SHORT COILED-COIL PROTEIN A"/>
    <property type="match status" value="1"/>
</dbReference>
<dbReference type="Pfam" id="PF10224">
    <property type="entry name" value="DUF2205"/>
    <property type="match status" value="1"/>
</dbReference>
<evidence type="ECO:0000250" key="1">
    <source>
        <dbReference type="UniProtKB" id="Q9UIL1"/>
    </source>
</evidence>
<evidence type="ECO:0000255" key="2"/>
<evidence type="ECO:0000256" key="3">
    <source>
        <dbReference type="SAM" id="MobiDB-lite"/>
    </source>
</evidence>
<evidence type="ECO:0000305" key="4"/>
<comment type="function">
    <text evidence="1">Positive regulator of amino acid starvation-induced autophagy.</text>
</comment>
<comment type="subcellular location">
    <subcellularLocation>
        <location evidence="1">Golgi apparatus membrane</location>
        <topology evidence="1">Peripheral membrane protein</topology>
        <orientation evidence="1">Cytoplasmic side</orientation>
    </subcellularLocation>
    <subcellularLocation>
        <location evidence="1">Golgi apparatus</location>
        <location evidence="1">trans-Golgi network</location>
    </subcellularLocation>
    <subcellularLocation>
        <location evidence="1">Cytoplasm</location>
        <location evidence="1">Cytosol</location>
    </subcellularLocation>
</comment>
<comment type="similarity">
    <text evidence="4">Belongs to the SCOC family.</text>
</comment>